<sequence length="130" mass="13951">MSMQDPISDMLTRVRNGQSANKVAVKMPSSKLKVAIAALLKAEGYIADFAVEGDIKPELEITLKYFQAKPVIEQIQRVSRPGLRVYKKNDALPSVMGGLGIAVVSTSKGLMSDRAARKAGLGGEIICYVA</sequence>
<gene>
    <name evidence="1" type="primary">rpsH</name>
    <name type="ordered locus">VFMJ11_0239</name>
</gene>
<protein>
    <recommendedName>
        <fullName evidence="1">Small ribosomal subunit protein uS8</fullName>
    </recommendedName>
    <alternativeName>
        <fullName evidence="2">30S ribosomal protein S8</fullName>
    </alternativeName>
</protein>
<accession>B5FG23</accession>
<keyword id="KW-0687">Ribonucleoprotein</keyword>
<keyword id="KW-0689">Ribosomal protein</keyword>
<keyword id="KW-0694">RNA-binding</keyword>
<keyword id="KW-0699">rRNA-binding</keyword>
<dbReference type="EMBL" id="CP001139">
    <property type="protein sequence ID" value="ACH65123.1"/>
    <property type="molecule type" value="Genomic_DNA"/>
</dbReference>
<dbReference type="RefSeq" id="WP_005417249.1">
    <property type="nucleotide sequence ID" value="NC_011184.1"/>
</dbReference>
<dbReference type="SMR" id="B5FG23"/>
<dbReference type="KEGG" id="vfm:VFMJ11_0239"/>
<dbReference type="HOGENOM" id="CLU_098428_0_0_6"/>
<dbReference type="Proteomes" id="UP000001857">
    <property type="component" value="Chromosome I"/>
</dbReference>
<dbReference type="GO" id="GO:1990904">
    <property type="term" value="C:ribonucleoprotein complex"/>
    <property type="evidence" value="ECO:0007669"/>
    <property type="project" value="UniProtKB-KW"/>
</dbReference>
<dbReference type="GO" id="GO:0005840">
    <property type="term" value="C:ribosome"/>
    <property type="evidence" value="ECO:0007669"/>
    <property type="project" value="UniProtKB-KW"/>
</dbReference>
<dbReference type="GO" id="GO:0019843">
    <property type="term" value="F:rRNA binding"/>
    <property type="evidence" value="ECO:0007669"/>
    <property type="project" value="UniProtKB-UniRule"/>
</dbReference>
<dbReference type="GO" id="GO:0003735">
    <property type="term" value="F:structural constituent of ribosome"/>
    <property type="evidence" value="ECO:0007669"/>
    <property type="project" value="InterPro"/>
</dbReference>
<dbReference type="GO" id="GO:0006412">
    <property type="term" value="P:translation"/>
    <property type="evidence" value="ECO:0007669"/>
    <property type="project" value="UniProtKB-UniRule"/>
</dbReference>
<dbReference type="FunFam" id="3.30.1370.30:FF:000003">
    <property type="entry name" value="30S ribosomal protein S8"/>
    <property type="match status" value="1"/>
</dbReference>
<dbReference type="FunFam" id="3.30.1490.10:FF:000001">
    <property type="entry name" value="30S ribosomal protein S8"/>
    <property type="match status" value="1"/>
</dbReference>
<dbReference type="Gene3D" id="3.30.1370.30">
    <property type="match status" value="1"/>
</dbReference>
<dbReference type="Gene3D" id="3.30.1490.10">
    <property type="match status" value="1"/>
</dbReference>
<dbReference type="HAMAP" id="MF_01302_B">
    <property type="entry name" value="Ribosomal_uS8_B"/>
    <property type="match status" value="1"/>
</dbReference>
<dbReference type="InterPro" id="IPR000630">
    <property type="entry name" value="Ribosomal_uS8"/>
</dbReference>
<dbReference type="InterPro" id="IPR047863">
    <property type="entry name" value="Ribosomal_uS8_CS"/>
</dbReference>
<dbReference type="InterPro" id="IPR035987">
    <property type="entry name" value="Ribosomal_uS8_sf"/>
</dbReference>
<dbReference type="NCBIfam" id="NF001109">
    <property type="entry name" value="PRK00136.1"/>
    <property type="match status" value="1"/>
</dbReference>
<dbReference type="PANTHER" id="PTHR11758">
    <property type="entry name" value="40S RIBOSOMAL PROTEIN S15A"/>
    <property type="match status" value="1"/>
</dbReference>
<dbReference type="Pfam" id="PF00410">
    <property type="entry name" value="Ribosomal_S8"/>
    <property type="match status" value="1"/>
</dbReference>
<dbReference type="SUPFAM" id="SSF56047">
    <property type="entry name" value="Ribosomal protein S8"/>
    <property type="match status" value="1"/>
</dbReference>
<dbReference type="PROSITE" id="PS00053">
    <property type="entry name" value="RIBOSOMAL_S8"/>
    <property type="match status" value="1"/>
</dbReference>
<comment type="function">
    <text evidence="1">One of the primary rRNA binding proteins, it binds directly to 16S rRNA central domain where it helps coordinate assembly of the platform of the 30S subunit.</text>
</comment>
<comment type="subunit">
    <text evidence="1">Part of the 30S ribosomal subunit. Contacts proteins S5 and S12.</text>
</comment>
<comment type="similarity">
    <text evidence="1">Belongs to the universal ribosomal protein uS8 family.</text>
</comment>
<evidence type="ECO:0000255" key="1">
    <source>
        <dbReference type="HAMAP-Rule" id="MF_01302"/>
    </source>
</evidence>
<evidence type="ECO:0000305" key="2"/>
<reference key="1">
    <citation type="submission" date="2008-08" db="EMBL/GenBank/DDBJ databases">
        <title>Complete sequence of Vibrio fischeri strain MJ11.</title>
        <authorList>
            <person name="Mandel M.J."/>
            <person name="Stabb E.V."/>
            <person name="Ruby E.G."/>
            <person name="Ferriera S."/>
            <person name="Johnson J."/>
            <person name="Kravitz S."/>
            <person name="Beeson K."/>
            <person name="Sutton G."/>
            <person name="Rogers Y.-H."/>
            <person name="Friedman R."/>
            <person name="Frazier M."/>
            <person name="Venter J.C."/>
        </authorList>
    </citation>
    <scope>NUCLEOTIDE SEQUENCE [LARGE SCALE GENOMIC DNA]</scope>
    <source>
        <strain>MJ11</strain>
    </source>
</reference>
<feature type="chain" id="PRO_1000140635" description="Small ribosomal subunit protein uS8">
    <location>
        <begin position="1"/>
        <end position="130"/>
    </location>
</feature>
<name>RS8_ALIFM</name>
<organism>
    <name type="scientific">Aliivibrio fischeri (strain MJ11)</name>
    <name type="common">Vibrio fischeri</name>
    <dbReference type="NCBI Taxonomy" id="388396"/>
    <lineage>
        <taxon>Bacteria</taxon>
        <taxon>Pseudomonadati</taxon>
        <taxon>Pseudomonadota</taxon>
        <taxon>Gammaproteobacteria</taxon>
        <taxon>Vibrionales</taxon>
        <taxon>Vibrionaceae</taxon>
        <taxon>Aliivibrio</taxon>
    </lineage>
</organism>
<proteinExistence type="inferred from homology"/>